<name>KDPC_MYCBO</name>
<feature type="chain" id="PRO_0000196998" description="Potassium-transporting ATPase KdpC subunit">
    <location>
        <begin position="1"/>
        <end position="189"/>
    </location>
</feature>
<feature type="transmembrane region" description="Helical" evidence="1">
    <location>
        <begin position="5"/>
        <end position="25"/>
    </location>
</feature>
<comment type="function">
    <text evidence="1">Part of the high-affinity ATP-driven potassium transport (or Kdp) system, which catalyzes the hydrolysis of ATP coupled with the electrogenic transport of potassium into the cytoplasm. This subunit acts as a catalytic chaperone that increases the ATP-binding affinity of the ATP-hydrolyzing subunit KdpB by the formation of a transient KdpB/KdpC/ATP ternary complex.</text>
</comment>
<comment type="subunit">
    <text evidence="1">The system is composed of three essential subunits: KdpA, KdpB and KdpC.</text>
</comment>
<comment type="subcellular location">
    <subcellularLocation>
        <location evidence="1">Cell membrane</location>
        <topology evidence="1">Single-pass membrane protein</topology>
    </subcellularLocation>
</comment>
<comment type="similarity">
    <text evidence="1">Belongs to the KdpC family.</text>
</comment>
<accession>P65212</accession>
<accession>A0A1R3XX68</accession>
<accession>P96369</accession>
<accession>X2BH18</accession>
<dbReference type="EMBL" id="LT708304">
    <property type="protein sequence ID" value="SIT99659.1"/>
    <property type="molecule type" value="Genomic_DNA"/>
</dbReference>
<dbReference type="RefSeq" id="NP_854716.1">
    <property type="nucleotide sequence ID" value="NC_002945.3"/>
</dbReference>
<dbReference type="RefSeq" id="WP_003405322.1">
    <property type="nucleotide sequence ID" value="NC_002945.4"/>
</dbReference>
<dbReference type="SMR" id="P65212"/>
<dbReference type="KEGG" id="mbo:BQ2027_MB1060"/>
<dbReference type="PATRIC" id="fig|233413.5.peg.1153"/>
<dbReference type="Proteomes" id="UP000001419">
    <property type="component" value="Chromosome"/>
</dbReference>
<dbReference type="GO" id="GO:0005886">
    <property type="term" value="C:plasma membrane"/>
    <property type="evidence" value="ECO:0007669"/>
    <property type="project" value="UniProtKB-SubCell"/>
</dbReference>
<dbReference type="GO" id="GO:0005524">
    <property type="term" value="F:ATP binding"/>
    <property type="evidence" value="ECO:0007669"/>
    <property type="project" value="UniProtKB-UniRule"/>
</dbReference>
<dbReference type="GO" id="GO:0008556">
    <property type="term" value="F:P-type potassium transmembrane transporter activity"/>
    <property type="evidence" value="ECO:0007669"/>
    <property type="project" value="InterPro"/>
</dbReference>
<dbReference type="HAMAP" id="MF_00276">
    <property type="entry name" value="KdpC"/>
    <property type="match status" value="1"/>
</dbReference>
<dbReference type="InterPro" id="IPR003820">
    <property type="entry name" value="KdpC"/>
</dbReference>
<dbReference type="NCBIfam" id="TIGR00681">
    <property type="entry name" value="kdpC"/>
    <property type="match status" value="1"/>
</dbReference>
<dbReference type="NCBIfam" id="NF001454">
    <property type="entry name" value="PRK00315.1"/>
    <property type="match status" value="1"/>
</dbReference>
<dbReference type="NCBIfam" id="NF010605">
    <property type="entry name" value="PRK14001.1"/>
    <property type="match status" value="1"/>
</dbReference>
<dbReference type="PANTHER" id="PTHR30042">
    <property type="entry name" value="POTASSIUM-TRANSPORTING ATPASE C CHAIN"/>
    <property type="match status" value="1"/>
</dbReference>
<dbReference type="PANTHER" id="PTHR30042:SF2">
    <property type="entry name" value="POTASSIUM-TRANSPORTING ATPASE KDPC SUBUNIT"/>
    <property type="match status" value="1"/>
</dbReference>
<dbReference type="Pfam" id="PF02669">
    <property type="entry name" value="KdpC"/>
    <property type="match status" value="1"/>
</dbReference>
<dbReference type="PIRSF" id="PIRSF001296">
    <property type="entry name" value="K_ATPase_KdpC"/>
    <property type="match status" value="1"/>
</dbReference>
<sequence length="189" mass="20028">MRRQLLPALTMLLVFTVITGIVYPLAVTGVGQLFFGDQANGALLERDGQVIGSAHIGQQFTAAKYFHPRPSSAGDGYDAAASSGSNLGPTNEKLLAAVAERVTAYRKENNLPADTLVPVDAVTGSGSGLDPAISVVNAKLQAPRVAQARNISIRQVERLIEDHTDARGLGFLGERAVNVLRLNLALDRL</sequence>
<gene>
    <name evidence="1" type="primary">kdpC</name>
    <name type="ordered locus">BQ2027_MB1060</name>
</gene>
<keyword id="KW-0067">ATP-binding</keyword>
<keyword id="KW-1003">Cell membrane</keyword>
<keyword id="KW-0406">Ion transport</keyword>
<keyword id="KW-0472">Membrane</keyword>
<keyword id="KW-0547">Nucleotide-binding</keyword>
<keyword id="KW-0630">Potassium</keyword>
<keyword id="KW-0633">Potassium transport</keyword>
<keyword id="KW-1185">Reference proteome</keyword>
<keyword id="KW-0812">Transmembrane</keyword>
<keyword id="KW-1133">Transmembrane helix</keyword>
<keyword id="KW-0813">Transport</keyword>
<protein>
    <recommendedName>
        <fullName evidence="1">Potassium-transporting ATPase KdpC subunit</fullName>
    </recommendedName>
    <alternativeName>
        <fullName evidence="1">ATP phosphohydrolase [potassium-transporting] C chain</fullName>
    </alternativeName>
    <alternativeName>
        <fullName evidence="1">Potassium-binding and translocating subunit C</fullName>
    </alternativeName>
    <alternativeName>
        <fullName evidence="1">Potassium-translocating ATPase C chain</fullName>
    </alternativeName>
</protein>
<reference key="1">
    <citation type="journal article" date="2003" name="Proc. Natl. Acad. Sci. U.S.A.">
        <title>The complete genome sequence of Mycobacterium bovis.</title>
        <authorList>
            <person name="Garnier T."/>
            <person name="Eiglmeier K."/>
            <person name="Camus J.-C."/>
            <person name="Medina N."/>
            <person name="Mansoor H."/>
            <person name="Pryor M."/>
            <person name="Duthoy S."/>
            <person name="Grondin S."/>
            <person name="Lacroix C."/>
            <person name="Monsempe C."/>
            <person name="Simon S."/>
            <person name="Harris B."/>
            <person name="Atkin R."/>
            <person name="Doggett J."/>
            <person name="Mayes R."/>
            <person name="Keating L."/>
            <person name="Wheeler P.R."/>
            <person name="Parkhill J."/>
            <person name="Barrell B.G."/>
            <person name="Cole S.T."/>
            <person name="Gordon S.V."/>
            <person name="Hewinson R.G."/>
        </authorList>
    </citation>
    <scope>NUCLEOTIDE SEQUENCE [LARGE SCALE GENOMIC DNA]</scope>
    <source>
        <strain>ATCC BAA-935 / AF2122/97</strain>
    </source>
</reference>
<reference key="2">
    <citation type="journal article" date="2017" name="Genome Announc.">
        <title>Updated reference genome sequence and annotation of Mycobacterium bovis AF2122/97.</title>
        <authorList>
            <person name="Malone K.M."/>
            <person name="Farrell D."/>
            <person name="Stuber T.P."/>
            <person name="Schubert O.T."/>
            <person name="Aebersold R."/>
            <person name="Robbe-Austerman S."/>
            <person name="Gordon S.V."/>
        </authorList>
    </citation>
    <scope>NUCLEOTIDE SEQUENCE [LARGE SCALE GENOMIC DNA]</scope>
    <scope>GENOME REANNOTATION</scope>
    <source>
        <strain>ATCC BAA-935 / AF2122/97</strain>
    </source>
</reference>
<organism>
    <name type="scientific">Mycobacterium bovis (strain ATCC BAA-935 / AF2122/97)</name>
    <dbReference type="NCBI Taxonomy" id="233413"/>
    <lineage>
        <taxon>Bacteria</taxon>
        <taxon>Bacillati</taxon>
        <taxon>Actinomycetota</taxon>
        <taxon>Actinomycetes</taxon>
        <taxon>Mycobacteriales</taxon>
        <taxon>Mycobacteriaceae</taxon>
        <taxon>Mycobacterium</taxon>
        <taxon>Mycobacterium tuberculosis complex</taxon>
    </lineage>
</organism>
<proteinExistence type="inferred from homology"/>
<evidence type="ECO:0000255" key="1">
    <source>
        <dbReference type="HAMAP-Rule" id="MF_00276"/>
    </source>
</evidence>